<proteinExistence type="inferred from homology"/>
<keyword id="KW-1185">Reference proteome</keyword>
<keyword id="KW-0687">Ribonucleoprotein</keyword>
<keyword id="KW-0689">Ribosomal protein</keyword>
<keyword id="KW-0694">RNA-binding</keyword>
<keyword id="KW-0699">rRNA-binding</keyword>
<dbReference type="EMBL" id="CP000821">
    <property type="protein sequence ID" value="ABV36732.1"/>
    <property type="molecule type" value="Genomic_DNA"/>
</dbReference>
<dbReference type="RefSeq" id="WP_012142467.1">
    <property type="nucleotide sequence ID" value="NC_009831.1"/>
</dbReference>
<dbReference type="SMR" id="A8FV59"/>
<dbReference type="STRING" id="425104.Ssed_2123"/>
<dbReference type="KEGG" id="sse:Ssed_2123"/>
<dbReference type="eggNOG" id="COG0292">
    <property type="taxonomic scope" value="Bacteria"/>
</dbReference>
<dbReference type="HOGENOM" id="CLU_123265_0_1_6"/>
<dbReference type="OrthoDB" id="9808966at2"/>
<dbReference type="Proteomes" id="UP000002015">
    <property type="component" value="Chromosome"/>
</dbReference>
<dbReference type="GO" id="GO:1990904">
    <property type="term" value="C:ribonucleoprotein complex"/>
    <property type="evidence" value="ECO:0007669"/>
    <property type="project" value="UniProtKB-KW"/>
</dbReference>
<dbReference type="GO" id="GO:0005840">
    <property type="term" value="C:ribosome"/>
    <property type="evidence" value="ECO:0007669"/>
    <property type="project" value="UniProtKB-KW"/>
</dbReference>
<dbReference type="GO" id="GO:0019843">
    <property type="term" value="F:rRNA binding"/>
    <property type="evidence" value="ECO:0007669"/>
    <property type="project" value="UniProtKB-UniRule"/>
</dbReference>
<dbReference type="GO" id="GO:0003735">
    <property type="term" value="F:structural constituent of ribosome"/>
    <property type="evidence" value="ECO:0007669"/>
    <property type="project" value="InterPro"/>
</dbReference>
<dbReference type="GO" id="GO:0000027">
    <property type="term" value="P:ribosomal large subunit assembly"/>
    <property type="evidence" value="ECO:0007669"/>
    <property type="project" value="UniProtKB-UniRule"/>
</dbReference>
<dbReference type="GO" id="GO:0006412">
    <property type="term" value="P:translation"/>
    <property type="evidence" value="ECO:0007669"/>
    <property type="project" value="InterPro"/>
</dbReference>
<dbReference type="CDD" id="cd07026">
    <property type="entry name" value="Ribosomal_L20"/>
    <property type="match status" value="1"/>
</dbReference>
<dbReference type="FunFam" id="1.10.1900.20:FF:000001">
    <property type="entry name" value="50S ribosomal protein L20"/>
    <property type="match status" value="1"/>
</dbReference>
<dbReference type="Gene3D" id="6.10.160.10">
    <property type="match status" value="1"/>
</dbReference>
<dbReference type="Gene3D" id="1.10.1900.20">
    <property type="entry name" value="Ribosomal protein L20"/>
    <property type="match status" value="1"/>
</dbReference>
<dbReference type="HAMAP" id="MF_00382">
    <property type="entry name" value="Ribosomal_bL20"/>
    <property type="match status" value="1"/>
</dbReference>
<dbReference type="InterPro" id="IPR005813">
    <property type="entry name" value="Ribosomal_bL20"/>
</dbReference>
<dbReference type="InterPro" id="IPR049946">
    <property type="entry name" value="RIBOSOMAL_L20_CS"/>
</dbReference>
<dbReference type="InterPro" id="IPR035566">
    <property type="entry name" value="Ribosomal_protein_bL20_C"/>
</dbReference>
<dbReference type="NCBIfam" id="TIGR01032">
    <property type="entry name" value="rplT_bact"/>
    <property type="match status" value="1"/>
</dbReference>
<dbReference type="PANTHER" id="PTHR10986">
    <property type="entry name" value="39S RIBOSOMAL PROTEIN L20"/>
    <property type="match status" value="1"/>
</dbReference>
<dbReference type="Pfam" id="PF00453">
    <property type="entry name" value="Ribosomal_L20"/>
    <property type="match status" value="1"/>
</dbReference>
<dbReference type="PRINTS" id="PR00062">
    <property type="entry name" value="RIBOSOMALL20"/>
</dbReference>
<dbReference type="SUPFAM" id="SSF74731">
    <property type="entry name" value="Ribosomal protein L20"/>
    <property type="match status" value="1"/>
</dbReference>
<dbReference type="PROSITE" id="PS00937">
    <property type="entry name" value="RIBOSOMAL_L20"/>
    <property type="match status" value="1"/>
</dbReference>
<organism>
    <name type="scientific">Shewanella sediminis (strain HAW-EB3)</name>
    <dbReference type="NCBI Taxonomy" id="425104"/>
    <lineage>
        <taxon>Bacteria</taxon>
        <taxon>Pseudomonadati</taxon>
        <taxon>Pseudomonadota</taxon>
        <taxon>Gammaproteobacteria</taxon>
        <taxon>Alteromonadales</taxon>
        <taxon>Shewanellaceae</taxon>
        <taxon>Shewanella</taxon>
    </lineage>
</organism>
<name>RL20_SHESH</name>
<sequence length="119" mass="13727">MPRVKRGVTARARHKKVLKLAKGYYGARSRTYRVAKQAVTKAGQYAYRDRRQKKRQFRQLWIARINAASRQNGLSYSRFINGLKKASIEIDRKILADIAVFDKVVFTTLVEKAKEALAK</sequence>
<accession>A8FV59</accession>
<evidence type="ECO:0000255" key="1">
    <source>
        <dbReference type="HAMAP-Rule" id="MF_00382"/>
    </source>
</evidence>
<evidence type="ECO:0000305" key="2"/>
<protein>
    <recommendedName>
        <fullName evidence="1">Large ribosomal subunit protein bL20</fullName>
    </recommendedName>
    <alternativeName>
        <fullName evidence="2">50S ribosomal protein L20</fullName>
    </alternativeName>
</protein>
<gene>
    <name evidence="1" type="primary">rplT</name>
    <name type="ordered locus">Ssed_2123</name>
</gene>
<comment type="function">
    <text evidence="1">Binds directly to 23S ribosomal RNA and is necessary for the in vitro assembly process of the 50S ribosomal subunit. It is not involved in the protein synthesizing functions of that subunit.</text>
</comment>
<comment type="similarity">
    <text evidence="1">Belongs to the bacterial ribosomal protein bL20 family.</text>
</comment>
<feature type="chain" id="PRO_1000080097" description="Large ribosomal subunit protein bL20">
    <location>
        <begin position="1"/>
        <end position="119"/>
    </location>
</feature>
<reference key="1">
    <citation type="submission" date="2007-08" db="EMBL/GenBank/DDBJ databases">
        <title>Complete sequence of Shewanella sediminis HAW-EB3.</title>
        <authorList>
            <consortium name="US DOE Joint Genome Institute"/>
            <person name="Copeland A."/>
            <person name="Lucas S."/>
            <person name="Lapidus A."/>
            <person name="Barry K."/>
            <person name="Glavina del Rio T."/>
            <person name="Dalin E."/>
            <person name="Tice H."/>
            <person name="Pitluck S."/>
            <person name="Chertkov O."/>
            <person name="Brettin T."/>
            <person name="Bruce D."/>
            <person name="Detter J.C."/>
            <person name="Han C."/>
            <person name="Schmutz J."/>
            <person name="Larimer F."/>
            <person name="Land M."/>
            <person name="Hauser L."/>
            <person name="Kyrpides N."/>
            <person name="Kim E."/>
            <person name="Zhao J.-S."/>
            <person name="Richardson P."/>
        </authorList>
    </citation>
    <scope>NUCLEOTIDE SEQUENCE [LARGE SCALE GENOMIC DNA]</scope>
    <source>
        <strain>HAW-EB3</strain>
    </source>
</reference>